<proteinExistence type="inferred from homology"/>
<organism>
    <name type="scientific">Escherichia coli (strain K12 / MC4100 / BW2952)</name>
    <dbReference type="NCBI Taxonomy" id="595496"/>
    <lineage>
        <taxon>Bacteria</taxon>
        <taxon>Pseudomonadati</taxon>
        <taxon>Pseudomonadota</taxon>
        <taxon>Gammaproteobacteria</taxon>
        <taxon>Enterobacterales</taxon>
        <taxon>Enterobacteriaceae</taxon>
        <taxon>Escherichia</taxon>
    </lineage>
</organism>
<keyword id="KW-0119">Carbohydrate metabolism</keyword>
<keyword id="KW-0146">Chitin degradation</keyword>
<keyword id="KW-0963">Cytoplasm</keyword>
<keyword id="KW-0378">Hydrolase</keyword>
<keyword id="KW-0460">Magnesium</keyword>
<keyword id="KW-0479">Metal-binding</keyword>
<keyword id="KW-0624">Polysaccharide degradation</keyword>
<comment type="function">
    <text evidence="1">Involved in the degradation of chitin. ChbG is essential for growth on the acetylated chitooligosaccharides chitobiose and chitotriose but is dispensable for growth on cellobiose and chitosan dimer, the deacetylated form of chitobiose. Deacetylation of chitobiose-6-P and chitotriose-6-P is necessary for both the activation of the chb promoter by the regulatory protein ChbR and the hydrolysis of phosphorylated beta-glucosides by the phospho-beta-glucosidase ChbF. Catalyzes the removal of only one acetyl group from chitobiose-6-P to yield monoacetylchitobiose-6-P, the inducer of ChbR and the substrate of ChbF.</text>
</comment>
<comment type="catalytic activity">
    <reaction evidence="1">
        <text>N,N'-diacetylchitobiose + H2O = N-acetyl-beta-D-glucosaminyl-(1-&gt;4)-D-glucosamine + acetate</text>
        <dbReference type="Rhea" id="RHEA:27469"/>
        <dbReference type="ChEBI" id="CHEBI:15377"/>
        <dbReference type="ChEBI" id="CHEBI:28681"/>
        <dbReference type="ChEBI" id="CHEBI:30089"/>
        <dbReference type="ChEBI" id="CHEBI:59910"/>
        <dbReference type="EC" id="3.5.1.105"/>
    </reaction>
</comment>
<comment type="catalytic activity">
    <reaction evidence="1">
        <text>diacetylchitobiose-6'-phosphate + H2O = N'-monoacetylchitobiose-6'-phosphate + acetate</text>
        <dbReference type="Rhea" id="RHEA:35083"/>
        <dbReference type="ChEBI" id="CHEBI:15377"/>
        <dbReference type="ChEBI" id="CHEBI:30089"/>
        <dbReference type="ChEBI" id="CHEBI:64883"/>
        <dbReference type="ChEBI" id="CHEBI:71315"/>
    </reaction>
</comment>
<comment type="cofactor">
    <cofactor evidence="1">
        <name>Mg(2+)</name>
        <dbReference type="ChEBI" id="CHEBI:18420"/>
    </cofactor>
</comment>
<comment type="pathway">
    <text evidence="1">Glycan degradation; chitin degradation.</text>
</comment>
<comment type="subunit">
    <text evidence="1">Homodimer.</text>
</comment>
<comment type="subcellular location">
    <subcellularLocation>
        <location evidence="1">Cytoplasm</location>
    </subcellularLocation>
</comment>
<comment type="similarity">
    <text evidence="1">Belongs to the YdjC deacetylase family. ChbG subfamily.</text>
</comment>
<dbReference type="EC" id="3.5.1.105" evidence="1"/>
<dbReference type="EMBL" id="CP001396">
    <property type="protein sequence ID" value="ACR62322.1"/>
    <property type="molecule type" value="Genomic_DNA"/>
</dbReference>
<dbReference type="RefSeq" id="WP_000440471.1">
    <property type="nucleotide sequence ID" value="NC_012759.1"/>
</dbReference>
<dbReference type="SMR" id="C4ZZ89"/>
<dbReference type="KEGG" id="ebw:BWG_1546"/>
<dbReference type="HOGENOM" id="CLU_064244_4_1_6"/>
<dbReference type="UniPathway" id="UPA00349"/>
<dbReference type="GO" id="GO:0005737">
    <property type="term" value="C:cytoplasm"/>
    <property type="evidence" value="ECO:0007669"/>
    <property type="project" value="UniProtKB-SubCell"/>
</dbReference>
<dbReference type="GO" id="GO:0036311">
    <property type="term" value="F:chitin disaccharide deacetylase activity"/>
    <property type="evidence" value="ECO:0007669"/>
    <property type="project" value="UniProtKB-UniRule"/>
</dbReference>
<dbReference type="GO" id="GO:0019213">
    <property type="term" value="F:deacetylase activity"/>
    <property type="evidence" value="ECO:0007669"/>
    <property type="project" value="TreeGrafter"/>
</dbReference>
<dbReference type="GO" id="GO:0046872">
    <property type="term" value="F:metal ion binding"/>
    <property type="evidence" value="ECO:0007669"/>
    <property type="project" value="UniProtKB-KW"/>
</dbReference>
<dbReference type="GO" id="GO:0006032">
    <property type="term" value="P:chitin catabolic process"/>
    <property type="evidence" value="ECO:0007669"/>
    <property type="project" value="UniProtKB-UniPathway"/>
</dbReference>
<dbReference type="GO" id="GO:0052777">
    <property type="term" value="P:diacetylchitobiose catabolic process"/>
    <property type="evidence" value="ECO:0007669"/>
    <property type="project" value="UniProtKB-UniRule"/>
</dbReference>
<dbReference type="GO" id="GO:0000272">
    <property type="term" value="P:polysaccharide catabolic process"/>
    <property type="evidence" value="ECO:0007669"/>
    <property type="project" value="UniProtKB-UniRule"/>
</dbReference>
<dbReference type="CDD" id="cd10803">
    <property type="entry name" value="YdjC_EF3048_like"/>
    <property type="match status" value="1"/>
</dbReference>
<dbReference type="FunFam" id="3.20.20.370:FF:000001">
    <property type="entry name" value="Chitooligosaccharide deacetylase"/>
    <property type="match status" value="1"/>
</dbReference>
<dbReference type="Gene3D" id="3.20.20.370">
    <property type="entry name" value="Glycoside hydrolase/deacetylase"/>
    <property type="match status" value="1"/>
</dbReference>
<dbReference type="HAMAP" id="MF_01246">
    <property type="entry name" value="COD"/>
    <property type="match status" value="1"/>
</dbReference>
<dbReference type="InterPro" id="IPR022948">
    <property type="entry name" value="COD_ChbG_bac"/>
</dbReference>
<dbReference type="InterPro" id="IPR011330">
    <property type="entry name" value="Glyco_hydro/deAcase_b/a-brl"/>
</dbReference>
<dbReference type="InterPro" id="IPR006879">
    <property type="entry name" value="YdjC-like"/>
</dbReference>
<dbReference type="NCBIfam" id="NF002559">
    <property type="entry name" value="PRK02134.1"/>
    <property type="match status" value="1"/>
</dbReference>
<dbReference type="PANTHER" id="PTHR31609:SF1">
    <property type="entry name" value="CARBOHYDRATE DEACETYLASE"/>
    <property type="match status" value="1"/>
</dbReference>
<dbReference type="PANTHER" id="PTHR31609">
    <property type="entry name" value="YDJC DEACETYLASE FAMILY MEMBER"/>
    <property type="match status" value="1"/>
</dbReference>
<dbReference type="Pfam" id="PF04794">
    <property type="entry name" value="YdjC"/>
    <property type="match status" value="1"/>
</dbReference>
<dbReference type="SUPFAM" id="SSF88713">
    <property type="entry name" value="Glycoside hydrolase/deacetylase"/>
    <property type="match status" value="1"/>
</dbReference>
<protein>
    <recommendedName>
        <fullName evidence="1">Chitooligosaccharide deacetylase</fullName>
        <shortName evidence="1">COD</shortName>
        <ecNumber evidence="1">3.5.1.105</ecNumber>
    </recommendedName>
    <alternativeName>
        <fullName evidence="1">Chitin disaccharide deacetylase</fullName>
    </alternativeName>
    <alternativeName>
        <fullName evidence="1">Chitobiose deacetylase</fullName>
    </alternativeName>
    <alternativeName>
        <fullName evidence="1">Chitobiose-6P deacetylase</fullName>
    </alternativeName>
    <alternativeName>
        <fullName evidence="1">Chitotriose deacetylase</fullName>
    </alternativeName>
    <alternativeName>
        <fullName evidence="1">Chitotriose-6P deacetylase</fullName>
    </alternativeName>
</protein>
<feature type="chain" id="PRO_1000214101" description="Chitooligosaccharide deacetylase">
    <location>
        <begin position="1"/>
        <end position="249"/>
    </location>
</feature>
<feature type="binding site" evidence="1">
    <location>
        <position position="61"/>
    </location>
    <ligand>
        <name>Mg(2+)</name>
        <dbReference type="ChEBI" id="CHEBI:18420"/>
    </ligand>
</feature>
<feature type="binding site" evidence="1">
    <location>
        <position position="125"/>
    </location>
    <ligand>
        <name>Mg(2+)</name>
        <dbReference type="ChEBI" id="CHEBI:18420"/>
    </ligand>
</feature>
<name>CHBG_ECOBW</name>
<accession>C4ZZ89</accession>
<reference key="1">
    <citation type="journal article" date="2009" name="J. Bacteriol.">
        <title>Genomic sequencing reveals regulatory mutations and recombinational events in the widely used MC4100 lineage of Escherichia coli K-12.</title>
        <authorList>
            <person name="Ferenci T."/>
            <person name="Zhou Z."/>
            <person name="Betteridge T."/>
            <person name="Ren Y."/>
            <person name="Liu Y."/>
            <person name="Feng L."/>
            <person name="Reeves P.R."/>
            <person name="Wang L."/>
        </authorList>
    </citation>
    <scope>NUCLEOTIDE SEQUENCE [LARGE SCALE GENOMIC DNA]</scope>
    <source>
        <strain>K12 / MC4100 / BW2952</strain>
    </source>
</reference>
<sequence>MERLLIVNADDFGLSKGQNYGIIEACRNGIVTSTTALVNGQAIDHAVQLSRDEPSLAIGMHFVLTMGKPLTAMPGLTRDGVLGKWIWQLAEEDALPLEEITQELVSQYLRFIELFGRKPTHLDSHHHVHMFPQIFPIVARFAAEQGIALRADRQMAFDLPVNLRTTQGFSSAFYGEEISESLFLQVLDDAGHRGDRSLEVMCHPAFIDNTIRQSAYCFPRLTELDVLTSASLKGAIAQRGYRLGSYRDV</sequence>
<evidence type="ECO:0000255" key="1">
    <source>
        <dbReference type="HAMAP-Rule" id="MF_01246"/>
    </source>
</evidence>
<gene>
    <name evidence="1" type="primary">chbG</name>
    <name type="ordered locus">BWG_1546</name>
</gene>